<comment type="function">
    <text>This photoactive protein is a photoreceptor with kinetics similar to that of rhodopsin.</text>
</comment>
<comment type="PTM">
    <text>The 4-hydroxycinnamic acid (p-coumaric acid) chromophore is covalently bound via a thioester linkage.</text>
</comment>
<comment type="similarity">
    <text evidence="2">Belongs to the photoactive yellow protein family.</text>
</comment>
<evidence type="ECO:0000255" key="1">
    <source>
        <dbReference type="PROSITE-ProRule" id="PRU00140"/>
    </source>
</evidence>
<evidence type="ECO:0000305" key="2"/>
<reference key="1">
    <citation type="journal article" date="1996" name="EMBO J.">
        <title>The xanthopsins: a new family of eubacterial blue-light photoreceptors.</title>
        <authorList>
            <person name="Kort R."/>
            <person name="Hoff W.D."/>
            <person name="van West M."/>
            <person name="Kroon A.R."/>
            <person name="Hoffer S.M."/>
            <person name="Vlieg K.H."/>
            <person name="Crielaard W."/>
            <person name="van Beeumen J.J."/>
            <person name="Hellingwerf K.J."/>
        </authorList>
    </citation>
    <scope>NUCLEOTIDE SEQUENCE [GENOMIC DNA]</scope>
    <source>
        <strain>ATCC 35888 / DSM 2132 / WS68</strain>
    </source>
</reference>
<reference key="2">
    <citation type="journal article" date="1996" name="Biochemistry">
        <title>Sequence evidence for strong conservation of the photoactive yellow proteins from the halophilic phototrophic bacteria Chromatium salexigens and Rhodospirillum salexigens.</title>
        <authorList>
            <person name="Koh M."/>
            <person name="van Driessche G."/>
            <person name="Samyn B."/>
            <person name="Hoff W.D."/>
            <person name="Meyer T.E."/>
            <person name="Cusanovich M.A."/>
            <person name="van Beeumen J.J."/>
        </authorList>
    </citation>
    <scope>PROTEIN SEQUENCE</scope>
</reference>
<keyword id="KW-0157">Chromophore</keyword>
<keyword id="KW-0903">Direct protein sequencing</keyword>
<keyword id="KW-0600">Photoreceptor protein</keyword>
<keyword id="KW-0675">Receptor</keyword>
<keyword id="KW-0716">Sensory transduction</keyword>
<gene>
    <name type="primary">pyp</name>
</gene>
<protein>
    <recommendedName>
        <fullName>Photoactive yellow protein</fullName>
        <shortName>PYP</shortName>
    </recommendedName>
</protein>
<organism>
    <name type="scientific">Rhodothalassium salexigens</name>
    <name type="common">Rhodospirillum salexigens</name>
    <dbReference type="NCBI Taxonomy" id="1086"/>
    <lineage>
        <taxon>Bacteria</taxon>
        <taxon>Pseudomonadati</taxon>
        <taxon>Pseudomonadota</taxon>
        <taxon>Alphaproteobacteria</taxon>
        <taxon>Rhodothalassiales</taxon>
        <taxon>Rhodothalassiaceae</taxon>
        <taxon>Rhodothalassium</taxon>
    </lineage>
</organism>
<proteinExistence type="evidence at protein level"/>
<feature type="chain" id="PRO_0000144916" description="Photoactive yellow protein">
    <location>
        <begin position="1"/>
        <end position="125"/>
    </location>
</feature>
<feature type="domain" description="PAS" evidence="1">
    <location>
        <begin position="23"/>
        <end position="86"/>
    </location>
</feature>
<feature type="modified residue" description="S-(4-hydroxycinnamyl)cysteine">
    <location>
        <position position="69"/>
    </location>
</feature>
<accession>Q53120</accession>
<sequence>MEMIKFGQDDIENAMADMGDAQIDDLAFGAIQLDETGTILAYNAAEGELTGRSPQDVIGKNFFKDIAPCTDTEEFGGRFREGVANGDLNAMFEYVFDYQMQPTKVKVHMKRAITGDSYWIFVKRV</sequence>
<name>PYP_RHOSA</name>
<dbReference type="EMBL" id="X98888">
    <property type="protein sequence ID" value="CAA67393.1"/>
    <property type="molecule type" value="Genomic_DNA"/>
</dbReference>
<dbReference type="SMR" id="Q53120"/>
<dbReference type="GO" id="GO:0009881">
    <property type="term" value="F:photoreceptor activity"/>
    <property type="evidence" value="ECO:0007669"/>
    <property type="project" value="UniProtKB-KW"/>
</dbReference>
<dbReference type="GO" id="GO:0007602">
    <property type="term" value="P:phototransduction"/>
    <property type="evidence" value="ECO:0007669"/>
    <property type="project" value="InterPro"/>
</dbReference>
<dbReference type="GO" id="GO:0006355">
    <property type="term" value="P:regulation of DNA-templated transcription"/>
    <property type="evidence" value="ECO:0007669"/>
    <property type="project" value="InterPro"/>
</dbReference>
<dbReference type="CDD" id="cd00130">
    <property type="entry name" value="PAS"/>
    <property type="match status" value="1"/>
</dbReference>
<dbReference type="Gene3D" id="3.30.450.20">
    <property type="entry name" value="PAS domain"/>
    <property type="match status" value="1"/>
</dbReference>
<dbReference type="InterPro" id="IPR000014">
    <property type="entry name" value="PAS"/>
</dbReference>
<dbReference type="InterPro" id="IPR035965">
    <property type="entry name" value="PAS-like_dom_sf"/>
</dbReference>
<dbReference type="InterPro" id="IPR013767">
    <property type="entry name" value="PAS_fold"/>
</dbReference>
<dbReference type="InterPro" id="IPR012130">
    <property type="entry name" value="PYP"/>
</dbReference>
<dbReference type="NCBIfam" id="TIGR02373">
    <property type="entry name" value="photo_yellow"/>
    <property type="match status" value="1"/>
</dbReference>
<dbReference type="Pfam" id="PF00989">
    <property type="entry name" value="PAS"/>
    <property type="match status" value="1"/>
</dbReference>
<dbReference type="PIRSF" id="PIRSF000087">
    <property type="entry name" value="PYP"/>
    <property type="match status" value="1"/>
</dbReference>
<dbReference type="SMART" id="SM00091">
    <property type="entry name" value="PAS"/>
    <property type="match status" value="1"/>
</dbReference>
<dbReference type="SUPFAM" id="SSF55785">
    <property type="entry name" value="PYP-like sensor domain (PAS domain)"/>
    <property type="match status" value="1"/>
</dbReference>
<dbReference type="PROSITE" id="PS50112">
    <property type="entry name" value="PAS"/>
    <property type="match status" value="1"/>
</dbReference>